<keyword id="KW-0067">ATP-binding</keyword>
<keyword id="KW-0315">Glutamine amidotransferase</keyword>
<keyword id="KW-0436">Ligase</keyword>
<keyword id="KW-0460">Magnesium</keyword>
<keyword id="KW-0479">Metal-binding</keyword>
<keyword id="KW-0547">Nucleotide-binding</keyword>
<keyword id="KW-0665">Pyrimidine biosynthesis</keyword>
<evidence type="ECO:0000255" key="1">
    <source>
        <dbReference type="HAMAP-Rule" id="MF_01227"/>
    </source>
</evidence>
<reference key="1">
    <citation type="journal article" date="2007" name="ISME J.">
        <title>Population level functional diversity in a microbial community revealed by comparative genomic and metagenomic analyses.</title>
        <authorList>
            <person name="Bhaya D."/>
            <person name="Grossman A.R."/>
            <person name="Steunou A.-S."/>
            <person name="Khuri N."/>
            <person name="Cohan F.M."/>
            <person name="Hamamura N."/>
            <person name="Melendrez M.C."/>
            <person name="Bateson M.M."/>
            <person name="Ward D.M."/>
            <person name="Heidelberg J.F."/>
        </authorList>
    </citation>
    <scope>NUCLEOTIDE SEQUENCE [LARGE SCALE GENOMIC DNA]</scope>
    <source>
        <strain>JA-3-3Ab</strain>
    </source>
</reference>
<comment type="function">
    <text evidence="1">Catalyzes the ATP-dependent amination of UTP to CTP with either L-glutamine or ammonia as the source of nitrogen. Regulates intracellular CTP levels through interactions with the four ribonucleotide triphosphates.</text>
</comment>
<comment type="catalytic activity">
    <reaction evidence="1">
        <text>UTP + L-glutamine + ATP + H2O = CTP + L-glutamate + ADP + phosphate + 2 H(+)</text>
        <dbReference type="Rhea" id="RHEA:26426"/>
        <dbReference type="ChEBI" id="CHEBI:15377"/>
        <dbReference type="ChEBI" id="CHEBI:15378"/>
        <dbReference type="ChEBI" id="CHEBI:29985"/>
        <dbReference type="ChEBI" id="CHEBI:30616"/>
        <dbReference type="ChEBI" id="CHEBI:37563"/>
        <dbReference type="ChEBI" id="CHEBI:43474"/>
        <dbReference type="ChEBI" id="CHEBI:46398"/>
        <dbReference type="ChEBI" id="CHEBI:58359"/>
        <dbReference type="ChEBI" id="CHEBI:456216"/>
        <dbReference type="EC" id="6.3.4.2"/>
    </reaction>
</comment>
<comment type="catalytic activity">
    <reaction evidence="1">
        <text>L-glutamine + H2O = L-glutamate + NH4(+)</text>
        <dbReference type="Rhea" id="RHEA:15889"/>
        <dbReference type="ChEBI" id="CHEBI:15377"/>
        <dbReference type="ChEBI" id="CHEBI:28938"/>
        <dbReference type="ChEBI" id="CHEBI:29985"/>
        <dbReference type="ChEBI" id="CHEBI:58359"/>
    </reaction>
</comment>
<comment type="catalytic activity">
    <reaction evidence="1">
        <text>UTP + NH4(+) + ATP = CTP + ADP + phosphate + 2 H(+)</text>
        <dbReference type="Rhea" id="RHEA:16597"/>
        <dbReference type="ChEBI" id="CHEBI:15378"/>
        <dbReference type="ChEBI" id="CHEBI:28938"/>
        <dbReference type="ChEBI" id="CHEBI:30616"/>
        <dbReference type="ChEBI" id="CHEBI:37563"/>
        <dbReference type="ChEBI" id="CHEBI:43474"/>
        <dbReference type="ChEBI" id="CHEBI:46398"/>
        <dbReference type="ChEBI" id="CHEBI:456216"/>
    </reaction>
</comment>
<comment type="activity regulation">
    <text evidence="1">Allosterically activated by GTP, when glutamine is the substrate; GTP has no effect on the reaction when ammonia is the substrate. The allosteric effector GTP functions by stabilizing the protein conformation that binds the tetrahedral intermediate(s) formed during glutamine hydrolysis. Inhibited by the product CTP, via allosteric rather than competitive inhibition.</text>
</comment>
<comment type="pathway">
    <text evidence="1">Pyrimidine metabolism; CTP biosynthesis via de novo pathway; CTP from UDP: step 2/2.</text>
</comment>
<comment type="subunit">
    <text evidence="1">Homotetramer.</text>
</comment>
<comment type="miscellaneous">
    <text evidence="1">CTPSs have evolved a hybrid strategy for distinguishing between UTP and CTP. The overlapping regions of the product feedback inhibitory and substrate sites recognize a common feature in both compounds, the triphosphate moiety. To differentiate isosteric substrate and product pyrimidine rings, an additional pocket far from the expected kinase/ligase catalytic site, specifically recognizes the cytosine and ribose portions of the product inhibitor.</text>
</comment>
<comment type="similarity">
    <text evidence="1">Belongs to the CTP synthase family.</text>
</comment>
<proteinExistence type="inferred from homology"/>
<organism>
    <name type="scientific">Synechococcus sp. (strain JA-3-3Ab)</name>
    <name type="common">Cyanobacteria bacterium Yellowstone A-Prime</name>
    <dbReference type="NCBI Taxonomy" id="321327"/>
    <lineage>
        <taxon>Bacteria</taxon>
        <taxon>Bacillati</taxon>
        <taxon>Cyanobacteriota</taxon>
        <taxon>Cyanophyceae</taxon>
        <taxon>Synechococcales</taxon>
        <taxon>Synechococcaceae</taxon>
        <taxon>Synechococcus</taxon>
    </lineage>
</organism>
<dbReference type="EC" id="6.3.4.2" evidence="1"/>
<dbReference type="EMBL" id="CP000239">
    <property type="protein sequence ID" value="ABC99646.1"/>
    <property type="molecule type" value="Genomic_DNA"/>
</dbReference>
<dbReference type="RefSeq" id="WP_011430324.1">
    <property type="nucleotide sequence ID" value="NC_007775.1"/>
</dbReference>
<dbReference type="SMR" id="Q2JUH1"/>
<dbReference type="STRING" id="321327.CYA_1479"/>
<dbReference type="MEROPS" id="C26.964"/>
<dbReference type="KEGG" id="cya:CYA_1479"/>
<dbReference type="eggNOG" id="COG0504">
    <property type="taxonomic scope" value="Bacteria"/>
</dbReference>
<dbReference type="HOGENOM" id="CLU_011675_5_0_3"/>
<dbReference type="OrthoDB" id="9801107at2"/>
<dbReference type="UniPathway" id="UPA00159">
    <property type="reaction ID" value="UER00277"/>
</dbReference>
<dbReference type="Proteomes" id="UP000008818">
    <property type="component" value="Chromosome"/>
</dbReference>
<dbReference type="GO" id="GO:0005829">
    <property type="term" value="C:cytosol"/>
    <property type="evidence" value="ECO:0007669"/>
    <property type="project" value="TreeGrafter"/>
</dbReference>
<dbReference type="GO" id="GO:0005524">
    <property type="term" value="F:ATP binding"/>
    <property type="evidence" value="ECO:0007669"/>
    <property type="project" value="UniProtKB-KW"/>
</dbReference>
<dbReference type="GO" id="GO:0003883">
    <property type="term" value="F:CTP synthase activity"/>
    <property type="evidence" value="ECO:0007669"/>
    <property type="project" value="UniProtKB-UniRule"/>
</dbReference>
<dbReference type="GO" id="GO:0004359">
    <property type="term" value="F:glutaminase activity"/>
    <property type="evidence" value="ECO:0007669"/>
    <property type="project" value="RHEA"/>
</dbReference>
<dbReference type="GO" id="GO:0042802">
    <property type="term" value="F:identical protein binding"/>
    <property type="evidence" value="ECO:0007669"/>
    <property type="project" value="TreeGrafter"/>
</dbReference>
<dbReference type="GO" id="GO:0046872">
    <property type="term" value="F:metal ion binding"/>
    <property type="evidence" value="ECO:0007669"/>
    <property type="project" value="UniProtKB-KW"/>
</dbReference>
<dbReference type="GO" id="GO:0044210">
    <property type="term" value="P:'de novo' CTP biosynthetic process"/>
    <property type="evidence" value="ECO:0007669"/>
    <property type="project" value="UniProtKB-UniRule"/>
</dbReference>
<dbReference type="GO" id="GO:0019856">
    <property type="term" value="P:pyrimidine nucleobase biosynthetic process"/>
    <property type="evidence" value="ECO:0007669"/>
    <property type="project" value="TreeGrafter"/>
</dbReference>
<dbReference type="CDD" id="cd03113">
    <property type="entry name" value="CTPS_N"/>
    <property type="match status" value="1"/>
</dbReference>
<dbReference type="CDD" id="cd01746">
    <property type="entry name" value="GATase1_CTP_Synthase"/>
    <property type="match status" value="1"/>
</dbReference>
<dbReference type="FunFam" id="3.40.50.300:FF:000009">
    <property type="entry name" value="CTP synthase"/>
    <property type="match status" value="1"/>
</dbReference>
<dbReference type="FunFam" id="3.40.50.880:FF:000002">
    <property type="entry name" value="CTP synthase"/>
    <property type="match status" value="1"/>
</dbReference>
<dbReference type="Gene3D" id="3.40.50.880">
    <property type="match status" value="1"/>
</dbReference>
<dbReference type="Gene3D" id="3.40.50.300">
    <property type="entry name" value="P-loop containing nucleotide triphosphate hydrolases"/>
    <property type="match status" value="1"/>
</dbReference>
<dbReference type="HAMAP" id="MF_01227">
    <property type="entry name" value="PyrG"/>
    <property type="match status" value="1"/>
</dbReference>
<dbReference type="InterPro" id="IPR029062">
    <property type="entry name" value="Class_I_gatase-like"/>
</dbReference>
<dbReference type="InterPro" id="IPR004468">
    <property type="entry name" value="CTP_synthase"/>
</dbReference>
<dbReference type="InterPro" id="IPR017456">
    <property type="entry name" value="CTP_synthase_N"/>
</dbReference>
<dbReference type="InterPro" id="IPR017926">
    <property type="entry name" value="GATASE"/>
</dbReference>
<dbReference type="InterPro" id="IPR033828">
    <property type="entry name" value="GATase1_CTP_Synthase"/>
</dbReference>
<dbReference type="InterPro" id="IPR027417">
    <property type="entry name" value="P-loop_NTPase"/>
</dbReference>
<dbReference type="NCBIfam" id="NF003792">
    <property type="entry name" value="PRK05380.1"/>
    <property type="match status" value="1"/>
</dbReference>
<dbReference type="NCBIfam" id="TIGR00337">
    <property type="entry name" value="PyrG"/>
    <property type="match status" value="1"/>
</dbReference>
<dbReference type="PANTHER" id="PTHR11550">
    <property type="entry name" value="CTP SYNTHASE"/>
    <property type="match status" value="1"/>
</dbReference>
<dbReference type="PANTHER" id="PTHR11550:SF0">
    <property type="entry name" value="CTP SYNTHASE-RELATED"/>
    <property type="match status" value="1"/>
</dbReference>
<dbReference type="Pfam" id="PF06418">
    <property type="entry name" value="CTP_synth_N"/>
    <property type="match status" value="1"/>
</dbReference>
<dbReference type="Pfam" id="PF00117">
    <property type="entry name" value="GATase"/>
    <property type="match status" value="1"/>
</dbReference>
<dbReference type="SUPFAM" id="SSF52317">
    <property type="entry name" value="Class I glutamine amidotransferase-like"/>
    <property type="match status" value="1"/>
</dbReference>
<dbReference type="SUPFAM" id="SSF52540">
    <property type="entry name" value="P-loop containing nucleoside triphosphate hydrolases"/>
    <property type="match status" value="1"/>
</dbReference>
<dbReference type="PROSITE" id="PS51273">
    <property type="entry name" value="GATASE_TYPE_1"/>
    <property type="match status" value="1"/>
</dbReference>
<gene>
    <name evidence="1" type="primary">pyrG</name>
    <name type="ordered locus">CYA_1479</name>
</gene>
<protein>
    <recommendedName>
        <fullName evidence="1">CTP synthase</fullName>
        <ecNumber evidence="1">6.3.4.2</ecNumber>
    </recommendedName>
    <alternativeName>
        <fullName evidence="1">Cytidine 5'-triphosphate synthase</fullName>
    </alternativeName>
    <alternativeName>
        <fullName evidence="1">Cytidine triphosphate synthetase</fullName>
        <shortName evidence="1">CTP synthetase</shortName>
        <shortName evidence="1">CTPS</shortName>
    </alternativeName>
    <alternativeName>
        <fullName evidence="1">UTP--ammonia ligase</fullName>
    </alternativeName>
</protein>
<name>PYRG_SYNJA</name>
<feature type="chain" id="PRO_0000266245" description="CTP synthase">
    <location>
        <begin position="1"/>
        <end position="544"/>
    </location>
</feature>
<feature type="domain" description="Glutamine amidotransferase type-1" evidence="1">
    <location>
        <begin position="292"/>
        <end position="534"/>
    </location>
</feature>
<feature type="region of interest" description="Amidoligase domain" evidence="1">
    <location>
        <begin position="1"/>
        <end position="267"/>
    </location>
</feature>
<feature type="active site" description="Nucleophile; for glutamine hydrolysis" evidence="1">
    <location>
        <position position="381"/>
    </location>
</feature>
<feature type="active site" evidence="1">
    <location>
        <position position="507"/>
    </location>
</feature>
<feature type="active site" evidence="1">
    <location>
        <position position="509"/>
    </location>
</feature>
<feature type="binding site" evidence="1">
    <location>
        <position position="13"/>
    </location>
    <ligand>
        <name>CTP</name>
        <dbReference type="ChEBI" id="CHEBI:37563"/>
        <note>allosteric inhibitor</note>
    </ligand>
</feature>
<feature type="binding site" evidence="1">
    <location>
        <position position="13"/>
    </location>
    <ligand>
        <name>UTP</name>
        <dbReference type="ChEBI" id="CHEBI:46398"/>
    </ligand>
</feature>
<feature type="binding site" evidence="1">
    <location>
        <begin position="14"/>
        <end position="19"/>
    </location>
    <ligand>
        <name>ATP</name>
        <dbReference type="ChEBI" id="CHEBI:30616"/>
    </ligand>
</feature>
<feature type="binding site" evidence="1">
    <location>
        <position position="54"/>
    </location>
    <ligand>
        <name>L-glutamine</name>
        <dbReference type="ChEBI" id="CHEBI:58359"/>
    </ligand>
</feature>
<feature type="binding site" evidence="1">
    <location>
        <position position="71"/>
    </location>
    <ligand>
        <name>ATP</name>
        <dbReference type="ChEBI" id="CHEBI:30616"/>
    </ligand>
</feature>
<feature type="binding site" evidence="1">
    <location>
        <position position="71"/>
    </location>
    <ligand>
        <name>Mg(2+)</name>
        <dbReference type="ChEBI" id="CHEBI:18420"/>
    </ligand>
</feature>
<feature type="binding site" evidence="1">
    <location>
        <position position="141"/>
    </location>
    <ligand>
        <name>Mg(2+)</name>
        <dbReference type="ChEBI" id="CHEBI:18420"/>
    </ligand>
</feature>
<feature type="binding site" evidence="1">
    <location>
        <begin position="148"/>
        <end position="150"/>
    </location>
    <ligand>
        <name>CTP</name>
        <dbReference type="ChEBI" id="CHEBI:37563"/>
        <note>allosteric inhibitor</note>
    </ligand>
</feature>
<feature type="binding site" evidence="1">
    <location>
        <begin position="188"/>
        <end position="193"/>
    </location>
    <ligand>
        <name>CTP</name>
        <dbReference type="ChEBI" id="CHEBI:37563"/>
        <note>allosteric inhibitor</note>
    </ligand>
</feature>
<feature type="binding site" evidence="1">
    <location>
        <begin position="188"/>
        <end position="193"/>
    </location>
    <ligand>
        <name>UTP</name>
        <dbReference type="ChEBI" id="CHEBI:46398"/>
    </ligand>
</feature>
<feature type="binding site" evidence="1">
    <location>
        <position position="224"/>
    </location>
    <ligand>
        <name>CTP</name>
        <dbReference type="ChEBI" id="CHEBI:37563"/>
        <note>allosteric inhibitor</note>
    </ligand>
</feature>
<feature type="binding site" evidence="1">
    <location>
        <position position="224"/>
    </location>
    <ligand>
        <name>UTP</name>
        <dbReference type="ChEBI" id="CHEBI:46398"/>
    </ligand>
</feature>
<feature type="binding site" evidence="1">
    <location>
        <position position="354"/>
    </location>
    <ligand>
        <name>L-glutamine</name>
        <dbReference type="ChEBI" id="CHEBI:58359"/>
    </ligand>
</feature>
<feature type="binding site" evidence="1">
    <location>
        <begin position="382"/>
        <end position="385"/>
    </location>
    <ligand>
        <name>L-glutamine</name>
        <dbReference type="ChEBI" id="CHEBI:58359"/>
    </ligand>
</feature>
<feature type="binding site" evidence="1">
    <location>
        <position position="405"/>
    </location>
    <ligand>
        <name>L-glutamine</name>
        <dbReference type="ChEBI" id="CHEBI:58359"/>
    </ligand>
</feature>
<feature type="binding site" evidence="1">
    <location>
        <position position="462"/>
    </location>
    <ligand>
        <name>L-glutamine</name>
        <dbReference type="ChEBI" id="CHEBI:58359"/>
    </ligand>
</feature>
<sequence length="544" mass="60645">MAKFVFITGGVVSSIGKGIVAASLGRLLKSRNYTVSILKLDPYINVDPGTMSPYQHGEVFVTDDGAETDLDLGHYERFTDTNMSKLNNVTTGAIYQAVIYKERRGDYQGSTVQVIPHVTQEIKERIRRVARETNPDVVLVEVGGTVGDIESLPFLEAIRQFRKDVGRANVAYVHVTLVPLIKAAGEMKTKPTQHSVKELRSIGIQPDVLVCRCEQPLPRSIKEKISEFCDVPVECVIQAQDAPSIYDVPLVLEQEGLAQRVLQILNLEPQQPDLREWELLVQRLHHPQEQVEIAIVGKYVRLTDAYLSVAEALRHAGLALNAGVTLRWISSEEVEERGPEALLADVDGVVVPGGFGSRGIEGKVATIRYVRERGIPFLGLCLGMQCAVIDWGCNIAGLERANSYEFDPDTPHPVISLLPEQKDVEHLGGTLRLGLYPCRILPDTLAAKLYGESIVYERHRHRYEFNNAYRSLFLESGYVISGVSPDNRLVEIIELPSHPFFIATQFHPEFRSRPNRPHPLFLGLIEAALRSRSRPQALQLQNTG</sequence>
<accession>Q2JUH1</accession>